<dbReference type="EMBL" id="CP000970">
    <property type="protein sequence ID" value="ACB16698.1"/>
    <property type="molecule type" value="Genomic_DNA"/>
</dbReference>
<dbReference type="RefSeq" id="WP_000543380.1">
    <property type="nucleotide sequence ID" value="NC_010498.1"/>
</dbReference>
<dbReference type="SMR" id="B1LFB6"/>
<dbReference type="KEGG" id="ecm:EcSMS35_1673"/>
<dbReference type="HOGENOM" id="CLU_2842804_0_0_6"/>
<dbReference type="Proteomes" id="UP000007011">
    <property type="component" value="Chromosome"/>
</dbReference>
<dbReference type="GO" id="GO:0005886">
    <property type="term" value="C:plasma membrane"/>
    <property type="evidence" value="ECO:0007669"/>
    <property type="project" value="UniProtKB-SubCell"/>
</dbReference>
<dbReference type="InterPro" id="IPR031411">
    <property type="entry name" value="SafA"/>
</dbReference>
<dbReference type="Pfam" id="PF17073">
    <property type="entry name" value="SafA"/>
    <property type="match status" value="1"/>
</dbReference>
<name>SAFA_ECOSM</name>
<keyword id="KW-0997">Cell inner membrane</keyword>
<keyword id="KW-1003">Cell membrane</keyword>
<keyword id="KW-0472">Membrane</keyword>
<keyword id="KW-0735">Signal-anchor</keyword>
<keyword id="KW-0346">Stress response</keyword>
<keyword id="KW-0812">Transmembrane</keyword>
<keyword id="KW-1133">Transmembrane helix</keyword>
<gene>
    <name type="primary">safA</name>
    <name type="ordered locus">EcSMS35_1673</name>
</gene>
<comment type="function">
    <text evidence="1">Connects the signal transduction between the two-component systems EvgS/EvgA and PhoQ/PhoP, by directly interacting with PhoQ and thus activating the PhoQ/PhoP system, in response to acid stress conditions.</text>
</comment>
<comment type="subunit">
    <text evidence="1">Interacts with PhoQ.</text>
</comment>
<comment type="subcellular location">
    <subcellularLocation>
        <location evidence="1">Cell inner membrane</location>
        <topology evidence="1">Single-pass type II membrane protein</topology>
    </subcellularLocation>
</comment>
<comment type="induction">
    <text evidence="1">By acid stress, via the EvgS/EvgA system.</text>
</comment>
<comment type="similarity">
    <text evidence="3">Belongs to the SafA family.</text>
</comment>
<reference key="1">
    <citation type="journal article" date="2008" name="J. Bacteriol.">
        <title>Insights into the environmental resistance gene pool from the genome sequence of the multidrug-resistant environmental isolate Escherichia coli SMS-3-5.</title>
        <authorList>
            <person name="Fricke W.F."/>
            <person name="Wright M.S."/>
            <person name="Lindell A.H."/>
            <person name="Harkins D.M."/>
            <person name="Baker-Austin C."/>
            <person name="Ravel J."/>
            <person name="Stepanauskas R."/>
        </authorList>
    </citation>
    <scope>NUCLEOTIDE SEQUENCE [LARGE SCALE GENOMIC DNA]</scope>
    <source>
        <strain>SMS-3-5 / SECEC</strain>
    </source>
</reference>
<protein>
    <recommendedName>
        <fullName>Two-component-system connector protein SafA</fullName>
    </recommendedName>
</protein>
<organism>
    <name type="scientific">Escherichia coli (strain SMS-3-5 / SECEC)</name>
    <dbReference type="NCBI Taxonomy" id="439855"/>
    <lineage>
        <taxon>Bacteria</taxon>
        <taxon>Pseudomonadati</taxon>
        <taxon>Pseudomonadota</taxon>
        <taxon>Gammaproteobacteria</taxon>
        <taxon>Enterobacterales</taxon>
        <taxon>Enterobacteriaceae</taxon>
        <taxon>Escherichia</taxon>
    </lineage>
</organism>
<sequence>MHATTVKNKIMQRDNYKEIMSVIVVVLLLTLTLIAIFSAIDQQGISEMGRMARDLTHFIINSLQD</sequence>
<evidence type="ECO:0000250" key="1"/>
<evidence type="ECO:0000255" key="2"/>
<evidence type="ECO:0000305" key="3"/>
<proteinExistence type="inferred from homology"/>
<accession>B1LFB6</accession>
<feature type="chain" id="PRO_0000340117" description="Two-component-system connector protein SafA">
    <location>
        <begin position="1"/>
        <end position="65"/>
    </location>
</feature>
<feature type="topological domain" description="Cytoplasmic" evidence="1">
    <location>
        <begin position="1"/>
        <end position="18"/>
    </location>
</feature>
<feature type="transmembrane region" description="Helical; Signal-anchor for type II membrane protein" evidence="2">
    <location>
        <begin position="19"/>
        <end position="39"/>
    </location>
</feature>
<feature type="topological domain" description="Periplasmic" evidence="1">
    <location>
        <begin position="40"/>
        <end position="65"/>
    </location>
</feature>